<evidence type="ECO:0000255" key="1">
    <source>
        <dbReference type="HAMAP-Rule" id="MF_00375"/>
    </source>
</evidence>
<comment type="catalytic activity">
    <reaction evidence="1">
        <text>(S)-4-amino-5-oxopentanoate = 5-aminolevulinate</text>
        <dbReference type="Rhea" id="RHEA:14265"/>
        <dbReference type="ChEBI" id="CHEBI:57501"/>
        <dbReference type="ChEBI" id="CHEBI:356416"/>
        <dbReference type="EC" id="5.4.3.8"/>
    </reaction>
</comment>
<comment type="cofactor">
    <cofactor evidence="1">
        <name>pyridoxal 5'-phosphate</name>
        <dbReference type="ChEBI" id="CHEBI:597326"/>
    </cofactor>
</comment>
<comment type="pathway">
    <text evidence="1">Porphyrin-containing compound metabolism; protoporphyrin-IX biosynthesis; 5-aminolevulinate from L-glutamyl-tRNA(Glu): step 2/2.</text>
</comment>
<comment type="subunit">
    <text evidence="1">Homodimer.</text>
</comment>
<comment type="subcellular location">
    <subcellularLocation>
        <location evidence="1">Cytoplasm</location>
    </subcellularLocation>
</comment>
<comment type="similarity">
    <text evidence="1">Belongs to the class-III pyridoxal-phosphate-dependent aminotransferase family. HemL subfamily.</text>
</comment>
<protein>
    <recommendedName>
        <fullName evidence="1">Glutamate-1-semialdehyde 2,1-aminomutase</fullName>
        <shortName evidence="1">GSA</shortName>
        <ecNumber evidence="1">5.4.3.8</ecNumber>
    </recommendedName>
    <alternativeName>
        <fullName evidence="1">Glutamate-1-semialdehyde aminotransferase</fullName>
        <shortName evidence="1">GSA-AT</shortName>
    </alternativeName>
</protein>
<reference key="1">
    <citation type="journal article" date="2006" name="J. Bacteriol.">
        <title>Complete genome sequence of the dehalorespiring bacterium Desulfitobacterium hafniense Y51 and comparison with Dehalococcoides ethenogenes 195.</title>
        <authorList>
            <person name="Nonaka H."/>
            <person name="Keresztes G."/>
            <person name="Shinoda Y."/>
            <person name="Ikenaga Y."/>
            <person name="Abe M."/>
            <person name="Naito K."/>
            <person name="Inatomi K."/>
            <person name="Furukawa K."/>
            <person name="Inui M."/>
            <person name="Yukawa H."/>
        </authorList>
    </citation>
    <scope>NUCLEOTIDE SEQUENCE [LARGE SCALE GENOMIC DNA]</scope>
    <source>
        <strain>Y51</strain>
    </source>
</reference>
<name>GSA_DESHY</name>
<keyword id="KW-0963">Cytoplasm</keyword>
<keyword id="KW-0413">Isomerase</keyword>
<keyword id="KW-0627">Porphyrin biosynthesis</keyword>
<keyword id="KW-0663">Pyridoxal phosphate</keyword>
<keyword id="KW-1185">Reference proteome</keyword>
<organism>
    <name type="scientific">Desulfitobacterium hafniense (strain Y51)</name>
    <dbReference type="NCBI Taxonomy" id="138119"/>
    <lineage>
        <taxon>Bacteria</taxon>
        <taxon>Bacillati</taxon>
        <taxon>Bacillota</taxon>
        <taxon>Clostridia</taxon>
        <taxon>Eubacteriales</taxon>
        <taxon>Desulfitobacteriaceae</taxon>
        <taxon>Desulfitobacterium</taxon>
    </lineage>
</organism>
<sequence length="430" mass="45778">MGFQDQRSKEAFARANGVLPGGVNSPVRAFKSVGREPIFIAKGQGARLWDIDGNSYLDYVLSWGPLILGHAHPVVVGAIKAAAERGTSYGAPTEIETECAEEVIKAFPSMEMVRMVSSGTEATMSALRLARGVTGRNKIIKFEGCYHGHGDSLLIKAGSGALTFGVPTSPGVPSSVASQTIVAQYNDLEGLKEIFKECGEDIAAVILEPVTGNMGVVLPQPGFLAGLRTLTQDYGSLLIFDEVMTGFRVSYGGAQGRYQIDPDLTCLGKVIGGGLPVAAYGGKRKYMEQVAPSGPIYQAGTLSGNPLAMAAGLATLKLLQQEGVYEGLEKKTTRLAEGLQSIAQELGFPIWVNSVGAMFSAFFTDQPVIDFKSACSSDVERFGSFFRGMLERGIYLAPSQYEAVFLSAAHTDADIDYTLEQARDVLKSLG</sequence>
<dbReference type="EC" id="5.4.3.8" evidence="1"/>
<dbReference type="EMBL" id="AP008230">
    <property type="protein sequence ID" value="BAE84008.1"/>
    <property type="molecule type" value="Genomic_DNA"/>
</dbReference>
<dbReference type="RefSeq" id="WP_011460175.1">
    <property type="nucleotide sequence ID" value="NC_007907.1"/>
</dbReference>
<dbReference type="SMR" id="Q24VD4"/>
<dbReference type="STRING" id="138119.DSY2219"/>
<dbReference type="KEGG" id="dsy:DSY2219"/>
<dbReference type="eggNOG" id="COG0001">
    <property type="taxonomic scope" value="Bacteria"/>
</dbReference>
<dbReference type="HOGENOM" id="CLU_016922_1_5_9"/>
<dbReference type="UniPathway" id="UPA00251">
    <property type="reaction ID" value="UER00317"/>
</dbReference>
<dbReference type="Proteomes" id="UP000001946">
    <property type="component" value="Chromosome"/>
</dbReference>
<dbReference type="GO" id="GO:0005737">
    <property type="term" value="C:cytoplasm"/>
    <property type="evidence" value="ECO:0007669"/>
    <property type="project" value="UniProtKB-SubCell"/>
</dbReference>
<dbReference type="GO" id="GO:0042286">
    <property type="term" value="F:glutamate-1-semialdehyde 2,1-aminomutase activity"/>
    <property type="evidence" value="ECO:0007669"/>
    <property type="project" value="UniProtKB-UniRule"/>
</dbReference>
<dbReference type="GO" id="GO:0030170">
    <property type="term" value="F:pyridoxal phosphate binding"/>
    <property type="evidence" value="ECO:0007669"/>
    <property type="project" value="InterPro"/>
</dbReference>
<dbReference type="GO" id="GO:0008483">
    <property type="term" value="F:transaminase activity"/>
    <property type="evidence" value="ECO:0007669"/>
    <property type="project" value="InterPro"/>
</dbReference>
<dbReference type="GO" id="GO:0006782">
    <property type="term" value="P:protoporphyrinogen IX biosynthetic process"/>
    <property type="evidence" value="ECO:0007669"/>
    <property type="project" value="UniProtKB-UniRule"/>
</dbReference>
<dbReference type="CDD" id="cd00610">
    <property type="entry name" value="OAT_like"/>
    <property type="match status" value="1"/>
</dbReference>
<dbReference type="FunFam" id="3.40.640.10:FF:000021">
    <property type="entry name" value="Glutamate-1-semialdehyde 2,1-aminomutase"/>
    <property type="match status" value="1"/>
</dbReference>
<dbReference type="Gene3D" id="3.90.1150.10">
    <property type="entry name" value="Aspartate Aminotransferase, domain 1"/>
    <property type="match status" value="1"/>
</dbReference>
<dbReference type="Gene3D" id="3.40.640.10">
    <property type="entry name" value="Type I PLP-dependent aspartate aminotransferase-like (Major domain)"/>
    <property type="match status" value="1"/>
</dbReference>
<dbReference type="HAMAP" id="MF_00375">
    <property type="entry name" value="HemL_aminotrans_3"/>
    <property type="match status" value="1"/>
</dbReference>
<dbReference type="InterPro" id="IPR004639">
    <property type="entry name" value="4pyrrol_synth_GluAld_NH2Trfase"/>
</dbReference>
<dbReference type="InterPro" id="IPR005814">
    <property type="entry name" value="Aminotrans_3"/>
</dbReference>
<dbReference type="InterPro" id="IPR049704">
    <property type="entry name" value="Aminotrans_3_PPA_site"/>
</dbReference>
<dbReference type="InterPro" id="IPR015424">
    <property type="entry name" value="PyrdxlP-dep_Trfase"/>
</dbReference>
<dbReference type="InterPro" id="IPR015421">
    <property type="entry name" value="PyrdxlP-dep_Trfase_major"/>
</dbReference>
<dbReference type="InterPro" id="IPR015422">
    <property type="entry name" value="PyrdxlP-dep_Trfase_small"/>
</dbReference>
<dbReference type="NCBIfam" id="TIGR00713">
    <property type="entry name" value="hemL"/>
    <property type="match status" value="1"/>
</dbReference>
<dbReference type="NCBIfam" id="NF000818">
    <property type="entry name" value="PRK00062.1"/>
    <property type="match status" value="1"/>
</dbReference>
<dbReference type="PANTHER" id="PTHR43713">
    <property type="entry name" value="GLUTAMATE-1-SEMIALDEHYDE 2,1-AMINOMUTASE"/>
    <property type="match status" value="1"/>
</dbReference>
<dbReference type="PANTHER" id="PTHR43713:SF3">
    <property type="entry name" value="GLUTAMATE-1-SEMIALDEHYDE 2,1-AMINOMUTASE 1, CHLOROPLASTIC-RELATED"/>
    <property type="match status" value="1"/>
</dbReference>
<dbReference type="Pfam" id="PF00202">
    <property type="entry name" value="Aminotran_3"/>
    <property type="match status" value="1"/>
</dbReference>
<dbReference type="SUPFAM" id="SSF53383">
    <property type="entry name" value="PLP-dependent transferases"/>
    <property type="match status" value="1"/>
</dbReference>
<dbReference type="PROSITE" id="PS00600">
    <property type="entry name" value="AA_TRANSFER_CLASS_3"/>
    <property type="match status" value="1"/>
</dbReference>
<feature type="chain" id="PRO_0000382307" description="Glutamate-1-semialdehyde 2,1-aminomutase">
    <location>
        <begin position="1"/>
        <end position="430"/>
    </location>
</feature>
<feature type="modified residue" description="N6-(pyridoxal phosphate)lysine" evidence="1">
    <location>
        <position position="269"/>
    </location>
</feature>
<accession>Q24VD4</accession>
<proteinExistence type="inferred from homology"/>
<gene>
    <name evidence="1" type="primary">hemL</name>
    <name type="ordered locus">DSY2219</name>
</gene>